<keyword id="KW-0067">ATP-binding</keyword>
<keyword id="KW-0436">Ligase</keyword>
<keyword id="KW-0547">Nucleotide-binding</keyword>
<keyword id="KW-0648">Protein biosynthesis</keyword>
<name>GATB_LACDB</name>
<organism>
    <name type="scientific">Lactobacillus delbrueckii subsp. bulgaricus (strain ATCC BAA-365 / Lb-18)</name>
    <dbReference type="NCBI Taxonomy" id="321956"/>
    <lineage>
        <taxon>Bacteria</taxon>
        <taxon>Bacillati</taxon>
        <taxon>Bacillota</taxon>
        <taxon>Bacilli</taxon>
        <taxon>Lactobacillales</taxon>
        <taxon>Lactobacillaceae</taxon>
        <taxon>Lactobacillus</taxon>
    </lineage>
</organism>
<proteinExistence type="inferred from homology"/>
<sequence>MNFTSTIGLEVHFELKTKSKIFSPSPVTYGAKPNTETNVIDWGYPGTLPMVNKEVYRLGLMVALATHSHVNPVTHFDRKNYFYPDNPKAYQITQFFKPLAENGYVEVEVHGKKKKIHIHEMHIEEDAGKNTHGTNGFSYVDYNRQGVPLLEVVSEPEMTDPDEAVAYLEKLREIVQFTGASDVKMEEGSMRIDTNISIRPAGQKELGTKVEMKNLNSFEHVRMSLAYEQKRQQEILLSGGRVRLSTRRFDTNTGKTVLERVKEGDADYRYFPEPDLPPYHIKQEWVDEIAANLPKTADERRKIYVDEYGLKPYDANVLLQNKESSDFFDATVAAGADPQQAANWMNTQVNGYLNEKHAELKDIALTPENLAAMIKLISDGTISSKIAKKVFAETVANGTDPKKYVEENGMAQLSDESVLAPMVKEVVDANPQSVEDYKNGKDRAIGFLVGQIMKQTRGKANPKVINKLLLADLASR</sequence>
<reference key="1">
    <citation type="journal article" date="2006" name="Proc. Natl. Acad. Sci. U.S.A.">
        <title>Comparative genomics of the lactic acid bacteria.</title>
        <authorList>
            <person name="Makarova K.S."/>
            <person name="Slesarev A."/>
            <person name="Wolf Y.I."/>
            <person name="Sorokin A."/>
            <person name="Mirkin B."/>
            <person name="Koonin E.V."/>
            <person name="Pavlov A."/>
            <person name="Pavlova N."/>
            <person name="Karamychev V."/>
            <person name="Polouchine N."/>
            <person name="Shakhova V."/>
            <person name="Grigoriev I."/>
            <person name="Lou Y."/>
            <person name="Rohksar D."/>
            <person name="Lucas S."/>
            <person name="Huang K."/>
            <person name="Goodstein D.M."/>
            <person name="Hawkins T."/>
            <person name="Plengvidhya V."/>
            <person name="Welker D."/>
            <person name="Hughes J."/>
            <person name="Goh Y."/>
            <person name="Benson A."/>
            <person name="Baldwin K."/>
            <person name="Lee J.-H."/>
            <person name="Diaz-Muniz I."/>
            <person name="Dosti B."/>
            <person name="Smeianov V."/>
            <person name="Wechter W."/>
            <person name="Barabote R."/>
            <person name="Lorca G."/>
            <person name="Altermann E."/>
            <person name="Barrangou R."/>
            <person name="Ganesan B."/>
            <person name="Xie Y."/>
            <person name="Rawsthorne H."/>
            <person name="Tamir D."/>
            <person name="Parker C."/>
            <person name="Breidt F."/>
            <person name="Broadbent J.R."/>
            <person name="Hutkins R."/>
            <person name="O'Sullivan D."/>
            <person name="Steele J."/>
            <person name="Unlu G."/>
            <person name="Saier M.H. Jr."/>
            <person name="Klaenhammer T."/>
            <person name="Richardson P."/>
            <person name="Kozyavkin S."/>
            <person name="Weimer B.C."/>
            <person name="Mills D.A."/>
        </authorList>
    </citation>
    <scope>NUCLEOTIDE SEQUENCE [LARGE SCALE GENOMIC DNA]</scope>
    <source>
        <strain>ATCC BAA-365 / Lb-18</strain>
    </source>
</reference>
<comment type="function">
    <text evidence="1">Allows the formation of correctly charged Asn-tRNA(Asn) or Gln-tRNA(Gln) through the transamidation of misacylated Asp-tRNA(Asn) or Glu-tRNA(Gln) in organisms which lack either or both of asparaginyl-tRNA or glutaminyl-tRNA synthetases. The reaction takes place in the presence of glutamine and ATP through an activated phospho-Asp-tRNA(Asn) or phospho-Glu-tRNA(Gln).</text>
</comment>
<comment type="catalytic activity">
    <reaction evidence="1">
        <text>L-glutamyl-tRNA(Gln) + L-glutamine + ATP + H2O = L-glutaminyl-tRNA(Gln) + L-glutamate + ADP + phosphate + H(+)</text>
        <dbReference type="Rhea" id="RHEA:17521"/>
        <dbReference type="Rhea" id="RHEA-COMP:9681"/>
        <dbReference type="Rhea" id="RHEA-COMP:9684"/>
        <dbReference type="ChEBI" id="CHEBI:15377"/>
        <dbReference type="ChEBI" id="CHEBI:15378"/>
        <dbReference type="ChEBI" id="CHEBI:29985"/>
        <dbReference type="ChEBI" id="CHEBI:30616"/>
        <dbReference type="ChEBI" id="CHEBI:43474"/>
        <dbReference type="ChEBI" id="CHEBI:58359"/>
        <dbReference type="ChEBI" id="CHEBI:78520"/>
        <dbReference type="ChEBI" id="CHEBI:78521"/>
        <dbReference type="ChEBI" id="CHEBI:456216"/>
    </reaction>
</comment>
<comment type="catalytic activity">
    <reaction evidence="1">
        <text>L-aspartyl-tRNA(Asn) + L-glutamine + ATP + H2O = L-asparaginyl-tRNA(Asn) + L-glutamate + ADP + phosphate + 2 H(+)</text>
        <dbReference type="Rhea" id="RHEA:14513"/>
        <dbReference type="Rhea" id="RHEA-COMP:9674"/>
        <dbReference type="Rhea" id="RHEA-COMP:9677"/>
        <dbReference type="ChEBI" id="CHEBI:15377"/>
        <dbReference type="ChEBI" id="CHEBI:15378"/>
        <dbReference type="ChEBI" id="CHEBI:29985"/>
        <dbReference type="ChEBI" id="CHEBI:30616"/>
        <dbReference type="ChEBI" id="CHEBI:43474"/>
        <dbReference type="ChEBI" id="CHEBI:58359"/>
        <dbReference type="ChEBI" id="CHEBI:78515"/>
        <dbReference type="ChEBI" id="CHEBI:78516"/>
        <dbReference type="ChEBI" id="CHEBI:456216"/>
    </reaction>
</comment>
<comment type="subunit">
    <text evidence="1">Heterotrimer of A, B and C subunits.</text>
</comment>
<comment type="similarity">
    <text evidence="1">Belongs to the GatB/GatE family. GatB subfamily.</text>
</comment>
<accession>Q04BV6</accession>
<protein>
    <recommendedName>
        <fullName evidence="1">Aspartyl/glutamyl-tRNA(Asn/Gln) amidotransferase subunit B</fullName>
        <shortName evidence="1">Asp/Glu-ADT subunit B</shortName>
        <ecNumber evidence="1">6.3.5.-</ecNumber>
    </recommendedName>
</protein>
<dbReference type="EC" id="6.3.5.-" evidence="1"/>
<dbReference type="EMBL" id="CP000412">
    <property type="protein sequence ID" value="ABJ58066.1"/>
    <property type="molecule type" value="Genomic_DNA"/>
</dbReference>
<dbReference type="RefSeq" id="WP_003620942.1">
    <property type="nucleotide sequence ID" value="NC_008529.1"/>
</dbReference>
<dbReference type="SMR" id="Q04BV6"/>
<dbReference type="KEGG" id="lbu:LBUL_0418"/>
<dbReference type="HOGENOM" id="CLU_019240_0_0_9"/>
<dbReference type="BioCyc" id="LDEL321956:LBUL_RS01965-MONOMER"/>
<dbReference type="GO" id="GO:0050566">
    <property type="term" value="F:asparaginyl-tRNA synthase (glutamine-hydrolyzing) activity"/>
    <property type="evidence" value="ECO:0007669"/>
    <property type="project" value="RHEA"/>
</dbReference>
<dbReference type="GO" id="GO:0005524">
    <property type="term" value="F:ATP binding"/>
    <property type="evidence" value="ECO:0007669"/>
    <property type="project" value="UniProtKB-KW"/>
</dbReference>
<dbReference type="GO" id="GO:0050567">
    <property type="term" value="F:glutaminyl-tRNA synthase (glutamine-hydrolyzing) activity"/>
    <property type="evidence" value="ECO:0007669"/>
    <property type="project" value="UniProtKB-UniRule"/>
</dbReference>
<dbReference type="GO" id="GO:0070681">
    <property type="term" value="P:glutaminyl-tRNAGln biosynthesis via transamidation"/>
    <property type="evidence" value="ECO:0007669"/>
    <property type="project" value="TreeGrafter"/>
</dbReference>
<dbReference type="GO" id="GO:0006412">
    <property type="term" value="P:translation"/>
    <property type="evidence" value="ECO:0007669"/>
    <property type="project" value="UniProtKB-UniRule"/>
</dbReference>
<dbReference type="FunFam" id="1.10.10.410:FF:000001">
    <property type="entry name" value="Aspartyl/glutamyl-tRNA(Asn/Gln) amidotransferase subunit B"/>
    <property type="match status" value="1"/>
</dbReference>
<dbReference type="Gene3D" id="1.10.10.410">
    <property type="match status" value="1"/>
</dbReference>
<dbReference type="Gene3D" id="1.10.150.380">
    <property type="entry name" value="GatB domain, N-terminal subdomain"/>
    <property type="match status" value="1"/>
</dbReference>
<dbReference type="HAMAP" id="MF_00121">
    <property type="entry name" value="GatB"/>
    <property type="match status" value="1"/>
</dbReference>
<dbReference type="InterPro" id="IPR017959">
    <property type="entry name" value="Asn/Gln-tRNA_amidoTrfase_suB/E"/>
</dbReference>
<dbReference type="InterPro" id="IPR006075">
    <property type="entry name" value="Asn/Gln-tRNA_Trfase_suB/E_cat"/>
</dbReference>
<dbReference type="InterPro" id="IPR018027">
    <property type="entry name" value="Asn/Gln_amidotransferase"/>
</dbReference>
<dbReference type="InterPro" id="IPR003789">
    <property type="entry name" value="Asn/Gln_tRNA_amidoTrase-B-like"/>
</dbReference>
<dbReference type="InterPro" id="IPR004413">
    <property type="entry name" value="GatB"/>
</dbReference>
<dbReference type="InterPro" id="IPR042114">
    <property type="entry name" value="GatB_C_1"/>
</dbReference>
<dbReference type="InterPro" id="IPR023168">
    <property type="entry name" value="GatB_Yqey_C_2"/>
</dbReference>
<dbReference type="InterPro" id="IPR017958">
    <property type="entry name" value="Gln-tRNA_amidoTrfase_suB_CS"/>
</dbReference>
<dbReference type="InterPro" id="IPR014746">
    <property type="entry name" value="Gln_synth/guanido_kin_cat_dom"/>
</dbReference>
<dbReference type="NCBIfam" id="TIGR00133">
    <property type="entry name" value="gatB"/>
    <property type="match status" value="1"/>
</dbReference>
<dbReference type="NCBIfam" id="NF004011">
    <property type="entry name" value="PRK05477.1-1"/>
    <property type="match status" value="1"/>
</dbReference>
<dbReference type="NCBIfam" id="NF004012">
    <property type="entry name" value="PRK05477.1-2"/>
    <property type="match status" value="1"/>
</dbReference>
<dbReference type="NCBIfam" id="NF004014">
    <property type="entry name" value="PRK05477.1-4"/>
    <property type="match status" value="1"/>
</dbReference>
<dbReference type="PANTHER" id="PTHR11659">
    <property type="entry name" value="GLUTAMYL-TRNA GLN AMIDOTRANSFERASE SUBUNIT B MITOCHONDRIAL AND PROKARYOTIC PET112-RELATED"/>
    <property type="match status" value="1"/>
</dbReference>
<dbReference type="PANTHER" id="PTHR11659:SF0">
    <property type="entry name" value="GLUTAMYL-TRNA(GLN) AMIDOTRANSFERASE SUBUNIT B, MITOCHONDRIAL"/>
    <property type="match status" value="1"/>
</dbReference>
<dbReference type="Pfam" id="PF02934">
    <property type="entry name" value="GatB_N"/>
    <property type="match status" value="1"/>
</dbReference>
<dbReference type="Pfam" id="PF02637">
    <property type="entry name" value="GatB_Yqey"/>
    <property type="match status" value="1"/>
</dbReference>
<dbReference type="SMART" id="SM00845">
    <property type="entry name" value="GatB_Yqey"/>
    <property type="match status" value="1"/>
</dbReference>
<dbReference type="SUPFAM" id="SSF89095">
    <property type="entry name" value="GatB/YqeY motif"/>
    <property type="match status" value="1"/>
</dbReference>
<dbReference type="SUPFAM" id="SSF55931">
    <property type="entry name" value="Glutamine synthetase/guanido kinase"/>
    <property type="match status" value="1"/>
</dbReference>
<dbReference type="PROSITE" id="PS01234">
    <property type="entry name" value="GATB"/>
    <property type="match status" value="1"/>
</dbReference>
<feature type="chain" id="PRO_1000015979" description="Aspartyl/glutamyl-tRNA(Asn/Gln) amidotransferase subunit B">
    <location>
        <begin position="1"/>
        <end position="476"/>
    </location>
</feature>
<evidence type="ECO:0000255" key="1">
    <source>
        <dbReference type="HAMAP-Rule" id="MF_00121"/>
    </source>
</evidence>
<gene>
    <name evidence="1" type="primary">gatB</name>
    <name type="ordered locus">LBUL_0418</name>
</gene>